<keyword id="KW-0687">Ribonucleoprotein</keyword>
<keyword id="KW-0689">Ribosomal protein</keyword>
<sequence length="64" mass="7666">MPKMKSHRGACKRFKKTASGRVKREKMYGSHNLEKKNRKRTRRIHQSTLVDKTQEKQIKRMILA</sequence>
<feature type="chain" id="PRO_1000127324" description="Large ribosomal subunit protein bL35">
    <location>
        <begin position="1"/>
        <end position="64"/>
    </location>
</feature>
<feature type="region of interest" description="Disordered" evidence="2">
    <location>
        <begin position="20"/>
        <end position="42"/>
    </location>
</feature>
<feature type="compositionally biased region" description="Basic and acidic residues" evidence="2">
    <location>
        <begin position="25"/>
        <end position="35"/>
    </location>
</feature>
<name>RL35_CHLPB</name>
<evidence type="ECO:0000255" key="1">
    <source>
        <dbReference type="HAMAP-Rule" id="MF_00514"/>
    </source>
</evidence>
<evidence type="ECO:0000256" key="2">
    <source>
        <dbReference type="SAM" id="MobiDB-lite"/>
    </source>
</evidence>
<evidence type="ECO:0000305" key="3"/>
<accession>B3EKG7</accession>
<reference key="1">
    <citation type="submission" date="2008-06" db="EMBL/GenBank/DDBJ databases">
        <title>Complete sequence of Chlorobium phaeobacteroides BS1.</title>
        <authorList>
            <consortium name="US DOE Joint Genome Institute"/>
            <person name="Lucas S."/>
            <person name="Copeland A."/>
            <person name="Lapidus A."/>
            <person name="Glavina del Rio T."/>
            <person name="Dalin E."/>
            <person name="Tice H."/>
            <person name="Bruce D."/>
            <person name="Goodwin L."/>
            <person name="Pitluck S."/>
            <person name="Schmutz J."/>
            <person name="Larimer F."/>
            <person name="Land M."/>
            <person name="Hauser L."/>
            <person name="Kyrpides N."/>
            <person name="Ovchinnikova G."/>
            <person name="Li T."/>
            <person name="Liu Z."/>
            <person name="Zhao F."/>
            <person name="Overmann J."/>
            <person name="Bryant D.A."/>
            <person name="Richardson P."/>
        </authorList>
    </citation>
    <scope>NUCLEOTIDE SEQUENCE [LARGE SCALE GENOMIC DNA]</scope>
    <source>
        <strain>BS1</strain>
    </source>
</reference>
<protein>
    <recommendedName>
        <fullName evidence="1">Large ribosomal subunit protein bL35</fullName>
    </recommendedName>
    <alternativeName>
        <fullName evidence="3">50S ribosomal protein L35</fullName>
    </alternativeName>
</protein>
<dbReference type="EMBL" id="CP001101">
    <property type="protein sequence ID" value="ACE03145.1"/>
    <property type="molecule type" value="Genomic_DNA"/>
</dbReference>
<dbReference type="SMR" id="B3EKG7"/>
<dbReference type="STRING" id="331678.Cphamn1_0170"/>
<dbReference type="KEGG" id="cpb:Cphamn1_0170"/>
<dbReference type="eggNOG" id="COG0291">
    <property type="taxonomic scope" value="Bacteria"/>
</dbReference>
<dbReference type="HOGENOM" id="CLU_169643_4_3_10"/>
<dbReference type="OrthoDB" id="47476at2"/>
<dbReference type="GO" id="GO:0022625">
    <property type="term" value="C:cytosolic large ribosomal subunit"/>
    <property type="evidence" value="ECO:0007669"/>
    <property type="project" value="TreeGrafter"/>
</dbReference>
<dbReference type="GO" id="GO:0003735">
    <property type="term" value="F:structural constituent of ribosome"/>
    <property type="evidence" value="ECO:0007669"/>
    <property type="project" value="InterPro"/>
</dbReference>
<dbReference type="GO" id="GO:0006412">
    <property type="term" value="P:translation"/>
    <property type="evidence" value="ECO:0007669"/>
    <property type="project" value="UniProtKB-UniRule"/>
</dbReference>
<dbReference type="FunFam" id="4.10.410.60:FF:000001">
    <property type="entry name" value="50S ribosomal protein L35"/>
    <property type="match status" value="1"/>
</dbReference>
<dbReference type="Gene3D" id="4.10.410.60">
    <property type="match status" value="1"/>
</dbReference>
<dbReference type="HAMAP" id="MF_00514">
    <property type="entry name" value="Ribosomal_bL35"/>
    <property type="match status" value="1"/>
</dbReference>
<dbReference type="InterPro" id="IPR001706">
    <property type="entry name" value="Ribosomal_bL35"/>
</dbReference>
<dbReference type="InterPro" id="IPR021137">
    <property type="entry name" value="Ribosomal_bL35-like"/>
</dbReference>
<dbReference type="InterPro" id="IPR018265">
    <property type="entry name" value="Ribosomal_bL35_CS"/>
</dbReference>
<dbReference type="InterPro" id="IPR037229">
    <property type="entry name" value="Ribosomal_bL35_sf"/>
</dbReference>
<dbReference type="NCBIfam" id="TIGR00001">
    <property type="entry name" value="rpmI_bact"/>
    <property type="match status" value="1"/>
</dbReference>
<dbReference type="PANTHER" id="PTHR33343">
    <property type="entry name" value="54S RIBOSOMAL PROTEIN BL35M"/>
    <property type="match status" value="1"/>
</dbReference>
<dbReference type="PANTHER" id="PTHR33343:SF1">
    <property type="entry name" value="LARGE RIBOSOMAL SUBUNIT PROTEIN BL35M"/>
    <property type="match status" value="1"/>
</dbReference>
<dbReference type="Pfam" id="PF01632">
    <property type="entry name" value="Ribosomal_L35p"/>
    <property type="match status" value="1"/>
</dbReference>
<dbReference type="PRINTS" id="PR00064">
    <property type="entry name" value="RIBOSOMALL35"/>
</dbReference>
<dbReference type="SUPFAM" id="SSF143034">
    <property type="entry name" value="L35p-like"/>
    <property type="match status" value="1"/>
</dbReference>
<dbReference type="PROSITE" id="PS00936">
    <property type="entry name" value="RIBOSOMAL_L35"/>
    <property type="match status" value="1"/>
</dbReference>
<comment type="similarity">
    <text evidence="1">Belongs to the bacterial ribosomal protein bL35 family.</text>
</comment>
<gene>
    <name evidence="1" type="primary">rpmI</name>
    <name type="ordered locus">Cphamn1_0170</name>
</gene>
<organism>
    <name type="scientific">Chlorobium phaeobacteroides (strain BS1)</name>
    <dbReference type="NCBI Taxonomy" id="331678"/>
    <lineage>
        <taxon>Bacteria</taxon>
        <taxon>Pseudomonadati</taxon>
        <taxon>Chlorobiota</taxon>
        <taxon>Chlorobiia</taxon>
        <taxon>Chlorobiales</taxon>
        <taxon>Chlorobiaceae</taxon>
        <taxon>Chlorobium/Pelodictyon group</taxon>
        <taxon>Chlorobium</taxon>
    </lineage>
</organism>
<proteinExistence type="inferred from homology"/>